<keyword id="KW-1185">Reference proteome</keyword>
<name>YHEU_ECO55</name>
<accession>B7L4N1</accession>
<evidence type="ECO:0000255" key="1">
    <source>
        <dbReference type="HAMAP-Rule" id="MF_00690"/>
    </source>
</evidence>
<proteinExistence type="inferred from homology"/>
<protein>
    <recommendedName>
        <fullName evidence="1">UPF0270 protein YheU</fullName>
    </recommendedName>
</protein>
<organism>
    <name type="scientific">Escherichia coli (strain 55989 / EAEC)</name>
    <dbReference type="NCBI Taxonomy" id="585055"/>
    <lineage>
        <taxon>Bacteria</taxon>
        <taxon>Pseudomonadati</taxon>
        <taxon>Pseudomonadota</taxon>
        <taxon>Gammaproteobacteria</taxon>
        <taxon>Enterobacterales</taxon>
        <taxon>Enterobacteriaceae</taxon>
        <taxon>Escherichia</taxon>
    </lineage>
</organism>
<feature type="chain" id="PRO_1000147810" description="UPF0270 protein YheU">
    <location>
        <begin position="1"/>
        <end position="72"/>
    </location>
</feature>
<dbReference type="EMBL" id="CU928145">
    <property type="protein sequence ID" value="CAV00077.1"/>
    <property type="molecule type" value="Genomic_DNA"/>
</dbReference>
<dbReference type="RefSeq" id="WP_000907085.1">
    <property type="nucleotide sequence ID" value="NZ_CP028304.1"/>
</dbReference>
<dbReference type="SMR" id="B7L4N1"/>
<dbReference type="KEGG" id="eck:EC55989_3759"/>
<dbReference type="HOGENOM" id="CLU_186759_1_0_6"/>
<dbReference type="Proteomes" id="UP000000746">
    <property type="component" value="Chromosome"/>
</dbReference>
<dbReference type="Gene3D" id="1.10.10.610">
    <property type="entry name" value="YehU-like"/>
    <property type="match status" value="1"/>
</dbReference>
<dbReference type="HAMAP" id="MF_00690">
    <property type="entry name" value="UPF0270"/>
    <property type="match status" value="1"/>
</dbReference>
<dbReference type="InterPro" id="IPR010648">
    <property type="entry name" value="UPF0270"/>
</dbReference>
<dbReference type="InterPro" id="IPR036685">
    <property type="entry name" value="YehU-like_sf"/>
</dbReference>
<dbReference type="NCBIfam" id="NF003438">
    <property type="entry name" value="PRK04966.1"/>
    <property type="match status" value="1"/>
</dbReference>
<dbReference type="Pfam" id="PF06794">
    <property type="entry name" value="UPF0270"/>
    <property type="match status" value="1"/>
</dbReference>
<dbReference type="PIRSF" id="PIRSF006169">
    <property type="entry name" value="UCP006169"/>
    <property type="match status" value="1"/>
</dbReference>
<dbReference type="SUPFAM" id="SSF118001">
    <property type="entry name" value="YehU-like"/>
    <property type="match status" value="1"/>
</dbReference>
<gene>
    <name evidence="1" type="primary">yheU</name>
    <name type="ordered locus">EC55989_3759</name>
</gene>
<sequence>MLIPWQDLSPETLENLIESFVLREGTDYGEHERTLEQKVADVKRQLQCGEAVLVWSELHETVNIMPRSQFRE</sequence>
<reference key="1">
    <citation type="journal article" date="2009" name="PLoS Genet.">
        <title>Organised genome dynamics in the Escherichia coli species results in highly diverse adaptive paths.</title>
        <authorList>
            <person name="Touchon M."/>
            <person name="Hoede C."/>
            <person name="Tenaillon O."/>
            <person name="Barbe V."/>
            <person name="Baeriswyl S."/>
            <person name="Bidet P."/>
            <person name="Bingen E."/>
            <person name="Bonacorsi S."/>
            <person name="Bouchier C."/>
            <person name="Bouvet O."/>
            <person name="Calteau A."/>
            <person name="Chiapello H."/>
            <person name="Clermont O."/>
            <person name="Cruveiller S."/>
            <person name="Danchin A."/>
            <person name="Diard M."/>
            <person name="Dossat C."/>
            <person name="Karoui M.E."/>
            <person name="Frapy E."/>
            <person name="Garry L."/>
            <person name="Ghigo J.M."/>
            <person name="Gilles A.M."/>
            <person name="Johnson J."/>
            <person name="Le Bouguenec C."/>
            <person name="Lescat M."/>
            <person name="Mangenot S."/>
            <person name="Martinez-Jehanne V."/>
            <person name="Matic I."/>
            <person name="Nassif X."/>
            <person name="Oztas S."/>
            <person name="Petit M.A."/>
            <person name="Pichon C."/>
            <person name="Rouy Z."/>
            <person name="Ruf C.S."/>
            <person name="Schneider D."/>
            <person name="Tourret J."/>
            <person name="Vacherie B."/>
            <person name="Vallenet D."/>
            <person name="Medigue C."/>
            <person name="Rocha E.P.C."/>
            <person name="Denamur E."/>
        </authorList>
    </citation>
    <scope>NUCLEOTIDE SEQUENCE [LARGE SCALE GENOMIC DNA]</scope>
    <source>
        <strain>55989 / EAEC</strain>
    </source>
</reference>
<comment type="similarity">
    <text evidence="1">Belongs to the UPF0270 family.</text>
</comment>